<name>LEC3B_HALCE</name>
<dbReference type="SMR" id="C0HK21"/>
<dbReference type="GO" id="GO:0030246">
    <property type="term" value="F:carbohydrate binding"/>
    <property type="evidence" value="ECO:0007669"/>
    <property type="project" value="UniProtKB-KW"/>
</dbReference>
<reference evidence="4" key="1">
    <citation type="journal article" date="2013" name="Int. J. Biochem. Cell Biol.">
        <title>H-3, a new lectin from the marine sponge Haliclona caerulea: purification and mass spectrometric characterization.</title>
        <authorList>
            <person name="Carneiro R.F."/>
            <person name="de Melo A.A."/>
            <person name="de Almeida A.S."/>
            <person name="Moura Rda M."/>
            <person name="Chaves R.P."/>
            <person name="de Sousa B.L."/>
            <person name="do Nascimento K.S."/>
            <person name="Sampaio S.S."/>
            <person name="Lima J.P."/>
            <person name="Cavada B.S."/>
            <person name="Nagano C.S."/>
            <person name="Sampaio A.H."/>
        </authorList>
    </citation>
    <scope>PROTEIN SEQUENCE</scope>
    <scope>FUNCTION</scope>
    <scope>BIOPHYSICOCHEMICAL PROPERTIES</scope>
    <scope>SUBUNIT</scope>
    <scope>GLYCOSYLATION</scope>
    <scope>MASS SPECTROMETRY</scope>
    <scope>IDENTIFICATION BY MASS SPECTROMETRY</scope>
</reference>
<comment type="function">
    <text evidence="2">Lectin with affinity for N-acetyl-galactosamine, carragenan and glycoprotein porcine stomach mucin (PSM). Has metal-independent hemagglutinating activity towards erythrocytes from rabbit and human. Hemagglutinating activity is not inhibited by D-galactose, D-glucose, D-mannose, D-fucose, methyl-alpha-D-galactopyranoside, methyl-alpha-D-glucopyranoside, N-acetyl-glucosamine, N-acetyl-mannosamine, D-fructose, alpha-D-lactose, beta-D-lactose, D-lactulose, D-sucrose, fucoidan or glycoproteins thyroglobulin and ovalmucoid.</text>
</comment>
<comment type="biophysicochemical properties">
    <phDependence>
        <text evidence="2">Optimum pH is 6-7 for hemagglutinating activity. Activity drops rapidly at lower or higher pH.</text>
    </phDependence>
    <temperatureDependence>
        <text evidence="2">Thermostable. Retains hemagglutinating activity after incubation at 60 degrees Celsius for 1 hour. At higher temperatures activity drops drastically.</text>
    </temperatureDependence>
</comment>
<comment type="subunit">
    <text evidence="2">Probable heterotrimer consisting of an alpha chain and two beta chains. The alpha chain can probably have different glycosylation states.</text>
</comment>
<comment type="PTM">
    <text evidence="2">Glycosylated.</text>
</comment>
<comment type="mass spectrometry"/>
<feature type="chain" id="PRO_0000437087" description="Halilectin 3, beta chain" evidence="2">
    <location>
        <begin position="1"/>
        <end position="106"/>
    </location>
</feature>
<feature type="glycosylation site" description="N-linked (GlcNAc...) asparagine" evidence="1">
    <location>
        <position position="65"/>
    </location>
</feature>
<evidence type="ECO:0000255" key="1">
    <source>
        <dbReference type="PROSITE-ProRule" id="PRU00498"/>
    </source>
</evidence>
<evidence type="ECO:0000269" key="2">
    <source>
    </source>
</evidence>
<evidence type="ECO:0000303" key="3">
    <source>
    </source>
</evidence>
<evidence type="ECO:0000305" key="4"/>
<evidence type="ECO:0000305" key="5">
    <source>
    </source>
</evidence>
<keyword id="KW-0903">Direct protein sequencing</keyword>
<keyword id="KW-0325">Glycoprotein</keyword>
<keyword id="KW-0430">Lectin</keyword>
<protein>
    <recommendedName>
        <fullName evidence="5">Halilectin 3, beta chain</fullName>
        <shortName evidence="3">H-3</shortName>
    </recommendedName>
</protein>
<proteinExistence type="evidence at protein level"/>
<organism evidence="3">
    <name type="scientific">Haliclona caerulea</name>
    <name type="common">Blue Caribbean sponge</name>
    <name type="synonym">Sigmadocia caerulea</name>
    <dbReference type="NCBI Taxonomy" id="1131259"/>
    <lineage>
        <taxon>Eukaryota</taxon>
        <taxon>Metazoa</taxon>
        <taxon>Porifera</taxon>
        <taxon>Demospongiae</taxon>
        <taxon>Heteroscleromorpha</taxon>
        <taxon>Haplosclerida</taxon>
        <taxon>Chalinidae</taxon>
        <taxon>Haliclona</taxon>
    </lineage>
</organism>
<accession>C0HK21</accession>
<sequence>AATCKETPPTWSGHLFEISTDNPRRADISYSREEKKIDTTDYKGVPLRTTLDDYATGTKYCRKSNLTGTIPTFGVPDKLPSPAGPHYLGGKLPSTGVLVLDFYGEK</sequence>